<proteinExistence type="evidence at transcript level"/>
<sequence>MKWLLLLGLLALSECIIHKVPLVRKKSLRKNLIEKGLLKDYLKTHTPNLATKYLPKAAFDSVPTETLENYLDTEYFGTIGIGTPAQDFTVIFDTGSSNLWVPSVYCSSAACSVHNQFNPEDSSTFQATSESLSITYGTGSMTGFLGYDTVKVGNIEDTNQIFGLSESEPGSFLYYAPFDGILGLAYPSISSSDATPVFDNMWNEGLVSEDLFSVYLSSDDESGSVVMFGGIDSSYYTGSLNWVPVSYEGYWQITLDSITMDGETIACADSCQAIVDTGTSLLAGPTSAISNIQSYIGASENSDGEMIVSCSSMYSLPNIVFTINGVQYPVPASAYILEEDDACISGFEGMNLDTYTGELWILGDVFIRQYFTVFDRANNQLGLAAAA</sequence>
<feature type="signal peptide">
    <location>
        <begin position="1"/>
        <end position="15"/>
    </location>
</feature>
<feature type="propeptide" id="PRO_0000026034" description="Activation peptide">
    <location>
        <begin position="16"/>
        <end position="59"/>
    </location>
</feature>
<feature type="chain" id="PRO_0000026035" description="Pepsin-3">
    <location>
        <begin position="60"/>
        <end position="387"/>
    </location>
</feature>
<feature type="domain" description="Peptidase A1" evidence="2">
    <location>
        <begin position="75"/>
        <end position="384"/>
    </location>
</feature>
<feature type="active site" evidence="3">
    <location>
        <position position="93"/>
    </location>
</feature>
<feature type="active site" evidence="3">
    <location>
        <position position="276"/>
    </location>
</feature>
<feature type="disulfide bond" evidence="1">
    <location>
        <begin position="106"/>
        <end position="111"/>
    </location>
</feature>
<feature type="disulfide bond" evidence="1">
    <location>
        <begin position="267"/>
        <end position="271"/>
    </location>
</feature>
<feature type="disulfide bond" evidence="1">
    <location>
        <begin position="310"/>
        <end position="343"/>
    </location>
</feature>
<name>PEPA3_RABIT</name>
<accession>P27822</accession>
<reference key="1">
    <citation type="journal article" date="1990" name="J. Biol. Chem.">
        <title>Structure and development of rabbit pepsinogens. Stage-specific zymogens, nucleotide sequences of cDNAs, molecular evolution, and gene expression during development.</title>
        <authorList>
            <person name="Kageyama T."/>
            <person name="Tanabe K."/>
            <person name="Koiwai O."/>
        </authorList>
    </citation>
    <scope>NUCLEOTIDE SEQUENCE [MRNA]</scope>
    <source>
        <strain>Japanese white</strain>
        <tissue>Gastric mucosa</tissue>
    </source>
</reference>
<organism>
    <name type="scientific">Oryctolagus cuniculus</name>
    <name type="common">Rabbit</name>
    <dbReference type="NCBI Taxonomy" id="9986"/>
    <lineage>
        <taxon>Eukaryota</taxon>
        <taxon>Metazoa</taxon>
        <taxon>Chordata</taxon>
        <taxon>Craniata</taxon>
        <taxon>Vertebrata</taxon>
        <taxon>Euteleostomi</taxon>
        <taxon>Mammalia</taxon>
        <taxon>Eutheria</taxon>
        <taxon>Euarchontoglires</taxon>
        <taxon>Glires</taxon>
        <taxon>Lagomorpha</taxon>
        <taxon>Leporidae</taxon>
        <taxon>Oryctolagus</taxon>
    </lineage>
</organism>
<comment type="function">
    <text>Shows particularly broad specificity; although bonds involving phenylalanine and leucine are preferred, many others are also cleaved to some extent.</text>
</comment>
<comment type="catalytic activity">
    <reaction evidence="3">
        <text>Preferential cleavage: hydrophobic, preferably aromatic, residues in P1 and P1' positions. Cleaves 1-Phe-|-Val-2, 4-Gln-|-His-5, 13-Glu-|-Ala-14, 14-Ala-|-Leu-15, 15-Leu-|-Tyr-16, 16-Tyr-|-Leu-17, 23-Gly-|-Phe-24, 24-Phe-|-Phe-25 and 25-Phe-|-Tyr-26 bonds in the B chain of insulin.</text>
        <dbReference type="EC" id="3.4.23.1"/>
    </reaction>
</comment>
<comment type="subcellular location">
    <subcellularLocation>
        <location>Secreted</location>
    </subcellularLocation>
</comment>
<comment type="developmental stage">
    <text>Pepsinogens in group I, II, and III where the predominant zymogens at late postnatal stage.</text>
</comment>
<comment type="similarity">
    <text evidence="4">Belongs to the peptidase A1 family.</text>
</comment>
<protein>
    <recommendedName>
        <fullName>Pepsin-3</fullName>
        <ecNumber>3.4.23.1</ecNumber>
    </recommendedName>
    <alternativeName>
        <fullName>Pepsin A</fullName>
    </alternativeName>
    <alternativeName>
        <fullName>Pepsin III</fullName>
    </alternativeName>
</protein>
<dbReference type="EC" id="3.4.23.1"/>
<dbReference type="EMBL" id="M59237">
    <property type="protein sequence ID" value="AAA85370.1"/>
    <property type="molecule type" value="mRNA"/>
</dbReference>
<dbReference type="PIR" id="E38302">
    <property type="entry name" value="E38302"/>
</dbReference>
<dbReference type="RefSeq" id="NP_001164550.1">
    <property type="nucleotide sequence ID" value="NM_001171079.1"/>
</dbReference>
<dbReference type="SMR" id="P27822"/>
<dbReference type="STRING" id="9986.ENSOCUP00000001544"/>
<dbReference type="MEROPS" id="A01.001"/>
<dbReference type="PaxDb" id="9986-ENSOCUP00000001544"/>
<dbReference type="GeneID" id="100328620"/>
<dbReference type="KEGG" id="ocu:100328620"/>
<dbReference type="eggNOG" id="KOG1339">
    <property type="taxonomic scope" value="Eukaryota"/>
</dbReference>
<dbReference type="InParanoid" id="P27822"/>
<dbReference type="OrthoDB" id="9528103at2759"/>
<dbReference type="Proteomes" id="UP000001811">
    <property type="component" value="Unplaced"/>
</dbReference>
<dbReference type="GO" id="GO:0005576">
    <property type="term" value="C:extracellular region"/>
    <property type="evidence" value="ECO:0007669"/>
    <property type="project" value="UniProtKB-SubCell"/>
</dbReference>
<dbReference type="GO" id="GO:0004190">
    <property type="term" value="F:aspartic-type endopeptidase activity"/>
    <property type="evidence" value="ECO:0007669"/>
    <property type="project" value="UniProtKB-KW"/>
</dbReference>
<dbReference type="GO" id="GO:0007586">
    <property type="term" value="P:digestion"/>
    <property type="evidence" value="ECO:0007669"/>
    <property type="project" value="UniProtKB-KW"/>
</dbReference>
<dbReference type="GO" id="GO:0006508">
    <property type="term" value="P:proteolysis"/>
    <property type="evidence" value="ECO:0007669"/>
    <property type="project" value="UniProtKB-KW"/>
</dbReference>
<dbReference type="CDD" id="cd05478">
    <property type="entry name" value="pepsin_A"/>
    <property type="match status" value="1"/>
</dbReference>
<dbReference type="FunFam" id="2.40.70.10:FF:000006">
    <property type="entry name" value="Cathepsin E"/>
    <property type="match status" value="1"/>
</dbReference>
<dbReference type="FunFam" id="2.40.70.10:FF:000004">
    <property type="entry name" value="Pepsin A"/>
    <property type="match status" value="1"/>
</dbReference>
<dbReference type="Gene3D" id="6.10.140.60">
    <property type="match status" value="1"/>
</dbReference>
<dbReference type="Gene3D" id="2.40.70.10">
    <property type="entry name" value="Acid Proteases"/>
    <property type="match status" value="2"/>
</dbReference>
<dbReference type="InterPro" id="IPR001461">
    <property type="entry name" value="Aspartic_peptidase_A1"/>
</dbReference>
<dbReference type="InterPro" id="IPR001969">
    <property type="entry name" value="Aspartic_peptidase_AS"/>
</dbReference>
<dbReference type="InterPro" id="IPR012848">
    <property type="entry name" value="Aspartic_peptidase_N"/>
</dbReference>
<dbReference type="InterPro" id="IPR034162">
    <property type="entry name" value="Pepsin_A"/>
</dbReference>
<dbReference type="InterPro" id="IPR033121">
    <property type="entry name" value="PEPTIDASE_A1"/>
</dbReference>
<dbReference type="InterPro" id="IPR021109">
    <property type="entry name" value="Peptidase_aspartic_dom_sf"/>
</dbReference>
<dbReference type="PANTHER" id="PTHR47966">
    <property type="entry name" value="BETA-SITE APP-CLEAVING ENZYME, ISOFORM A-RELATED"/>
    <property type="match status" value="1"/>
</dbReference>
<dbReference type="PANTHER" id="PTHR47966:SF22">
    <property type="entry name" value="PEPSIN A-3-RELATED"/>
    <property type="match status" value="1"/>
</dbReference>
<dbReference type="Pfam" id="PF07966">
    <property type="entry name" value="A1_Propeptide"/>
    <property type="match status" value="1"/>
</dbReference>
<dbReference type="Pfam" id="PF00026">
    <property type="entry name" value="Asp"/>
    <property type="match status" value="1"/>
</dbReference>
<dbReference type="PRINTS" id="PR00792">
    <property type="entry name" value="PEPSIN"/>
</dbReference>
<dbReference type="SUPFAM" id="SSF50630">
    <property type="entry name" value="Acid proteases"/>
    <property type="match status" value="1"/>
</dbReference>
<dbReference type="PROSITE" id="PS00141">
    <property type="entry name" value="ASP_PROTEASE"/>
    <property type="match status" value="2"/>
</dbReference>
<dbReference type="PROSITE" id="PS51767">
    <property type="entry name" value="PEPTIDASE_A1"/>
    <property type="match status" value="1"/>
</dbReference>
<keyword id="KW-0064">Aspartyl protease</keyword>
<keyword id="KW-0222">Digestion</keyword>
<keyword id="KW-1015">Disulfide bond</keyword>
<keyword id="KW-0378">Hydrolase</keyword>
<keyword id="KW-0645">Protease</keyword>
<keyword id="KW-1185">Reference proteome</keyword>
<keyword id="KW-0964">Secreted</keyword>
<keyword id="KW-0732">Signal</keyword>
<keyword id="KW-0865">Zymogen</keyword>
<evidence type="ECO:0000250" key="1"/>
<evidence type="ECO:0000255" key="2">
    <source>
        <dbReference type="PROSITE-ProRule" id="PRU01103"/>
    </source>
</evidence>
<evidence type="ECO:0000255" key="3">
    <source>
        <dbReference type="PROSITE-ProRule" id="PRU10094"/>
    </source>
</evidence>
<evidence type="ECO:0000305" key="4"/>